<accession>Q8CFG5</accession>
<protein>
    <recommendedName>
        <fullName>Voltage-dependent calcium channel subunit alpha-2/delta-3</fullName>
    </recommendedName>
    <alternativeName>
        <fullName>Voltage-gated calcium channel subunit alpha-2/delta-3</fullName>
    </alternativeName>
    <component>
        <recommendedName>
            <fullName>Voltage-dependent calcium channel subunit alpha-2-3</fullName>
        </recommendedName>
    </component>
    <component>
        <recommendedName>
            <fullName>Voltage-dependent calcium channel subunit delta-3</fullName>
        </recommendedName>
    </component>
</protein>
<proteinExistence type="evidence at protein level"/>
<dbReference type="EMBL" id="AF486278">
    <property type="protein sequence ID" value="AAO14654.1"/>
    <property type="molecule type" value="mRNA"/>
</dbReference>
<dbReference type="RefSeq" id="NP_783185.1">
    <property type="nucleotide sequence ID" value="NM_175595.2"/>
</dbReference>
<dbReference type="RefSeq" id="XP_063131357.1">
    <property type="nucleotide sequence ID" value="XM_063275287.1"/>
</dbReference>
<dbReference type="SMR" id="Q8CFG5"/>
<dbReference type="FunCoup" id="Q8CFG5">
    <property type="interactions" value="2201"/>
</dbReference>
<dbReference type="STRING" id="10116.ENSRNOP00000042602"/>
<dbReference type="GlyCosmos" id="Q8CFG5">
    <property type="glycosylation" value="4 sites, No reported glycans"/>
</dbReference>
<dbReference type="GlyGen" id="Q8CFG5">
    <property type="glycosylation" value="4 sites"/>
</dbReference>
<dbReference type="iPTMnet" id="Q8CFG5"/>
<dbReference type="PhosphoSitePlus" id="Q8CFG5"/>
<dbReference type="PaxDb" id="10116-ENSRNOP00000042602"/>
<dbReference type="Ensembl" id="ENSRNOT00000048043.4">
    <property type="protein sequence ID" value="ENSRNOP00000042602.4"/>
    <property type="gene ID" value="ENSRNOG00000031287.5"/>
</dbReference>
<dbReference type="GeneID" id="306243"/>
<dbReference type="KEGG" id="rno:306243"/>
<dbReference type="UCSC" id="RGD:631361">
    <property type="organism name" value="rat"/>
</dbReference>
<dbReference type="AGR" id="RGD:631361"/>
<dbReference type="CTD" id="55799"/>
<dbReference type="RGD" id="631361">
    <property type="gene designation" value="Cacna2d3"/>
</dbReference>
<dbReference type="eggNOG" id="KOG2353">
    <property type="taxonomic scope" value="Eukaryota"/>
</dbReference>
<dbReference type="GeneTree" id="ENSGT00940000155766"/>
<dbReference type="InParanoid" id="Q8CFG5"/>
<dbReference type="PhylomeDB" id="Q8CFG5"/>
<dbReference type="Reactome" id="R-RNO-112308">
    <property type="pathway name" value="Presynaptic depolarization and calcium channel opening"/>
</dbReference>
<dbReference type="PRO" id="PR:Q8CFG5"/>
<dbReference type="Proteomes" id="UP000002494">
    <property type="component" value="Chromosome 16"/>
</dbReference>
<dbReference type="GO" id="GO:0098982">
    <property type="term" value="C:GABA-ergic synapse"/>
    <property type="evidence" value="ECO:0000266"/>
    <property type="project" value="RGD"/>
</dbReference>
<dbReference type="GO" id="GO:0048787">
    <property type="term" value="C:presynaptic active zone membrane"/>
    <property type="evidence" value="ECO:0000266"/>
    <property type="project" value="RGD"/>
</dbReference>
<dbReference type="GO" id="GO:0005891">
    <property type="term" value="C:voltage-gated calcium channel complex"/>
    <property type="evidence" value="ECO:0000318"/>
    <property type="project" value="GO_Central"/>
</dbReference>
<dbReference type="GO" id="GO:0005246">
    <property type="term" value="F:calcium channel regulator activity"/>
    <property type="evidence" value="ECO:0000304"/>
    <property type="project" value="RGD"/>
</dbReference>
<dbReference type="GO" id="GO:0046872">
    <property type="term" value="F:metal ion binding"/>
    <property type="evidence" value="ECO:0007669"/>
    <property type="project" value="UniProtKB-KW"/>
</dbReference>
<dbReference type="GO" id="GO:0005245">
    <property type="term" value="F:voltage-gated calcium channel activity"/>
    <property type="evidence" value="ECO:0000314"/>
    <property type="project" value="RGD"/>
</dbReference>
<dbReference type="GO" id="GO:0006816">
    <property type="term" value="P:calcium ion transport"/>
    <property type="evidence" value="ECO:0000314"/>
    <property type="project" value="RGD"/>
</dbReference>
<dbReference type="GO" id="GO:1990314">
    <property type="term" value="P:cellular response to insulin-like growth factor stimulus"/>
    <property type="evidence" value="ECO:0000270"/>
    <property type="project" value="RGD"/>
</dbReference>
<dbReference type="GO" id="GO:0099174">
    <property type="term" value="P:regulation of presynapse organization"/>
    <property type="evidence" value="ECO:0000266"/>
    <property type="project" value="RGD"/>
</dbReference>
<dbReference type="CDD" id="cd12912">
    <property type="entry name" value="PDC2_MCP_like"/>
    <property type="match status" value="1"/>
</dbReference>
<dbReference type="CDD" id="cd01463">
    <property type="entry name" value="vWA_VGCC_like"/>
    <property type="match status" value="1"/>
</dbReference>
<dbReference type="FunFam" id="3.30.450.20:FF:000012">
    <property type="entry name" value="Calcium channel, voltage-dependent, alpha2/delta subunit 3"/>
    <property type="match status" value="1"/>
</dbReference>
<dbReference type="FunFam" id="3.40.50.410:FF:000007">
    <property type="entry name" value="Calcium voltage-gated channel auxiliary subunit alpha2delta 3"/>
    <property type="match status" value="1"/>
</dbReference>
<dbReference type="Gene3D" id="3.30.450.20">
    <property type="entry name" value="PAS domain"/>
    <property type="match status" value="1"/>
</dbReference>
<dbReference type="Gene3D" id="3.40.50.410">
    <property type="entry name" value="von Willebrand factor, type A domain"/>
    <property type="match status" value="1"/>
</dbReference>
<dbReference type="InterPro" id="IPR051173">
    <property type="entry name" value="Ca_channel_alpha-2/delta"/>
</dbReference>
<dbReference type="InterPro" id="IPR013680">
    <property type="entry name" value="VDCC_a2/dsu"/>
</dbReference>
<dbReference type="InterPro" id="IPR013608">
    <property type="entry name" value="VWA_N"/>
</dbReference>
<dbReference type="InterPro" id="IPR002035">
    <property type="entry name" value="VWF_A"/>
</dbReference>
<dbReference type="InterPro" id="IPR036465">
    <property type="entry name" value="vWFA_dom_sf"/>
</dbReference>
<dbReference type="PANTHER" id="PTHR10166">
    <property type="entry name" value="VOLTAGE-DEPENDENT CALCIUM CHANNEL SUBUNIT ALPHA-2/DELTA-RELATED"/>
    <property type="match status" value="1"/>
</dbReference>
<dbReference type="PANTHER" id="PTHR10166:SF25">
    <property type="entry name" value="VOLTAGE-DEPENDENT CALCIUM CHANNEL SUBUNIT ALPHA-2_DELTA-3"/>
    <property type="match status" value="1"/>
</dbReference>
<dbReference type="Pfam" id="PF08473">
    <property type="entry name" value="VGCC_alpha2"/>
    <property type="match status" value="1"/>
</dbReference>
<dbReference type="Pfam" id="PF13768">
    <property type="entry name" value="VWA_3"/>
    <property type="match status" value="1"/>
</dbReference>
<dbReference type="Pfam" id="PF08399">
    <property type="entry name" value="VWA_N"/>
    <property type="match status" value="1"/>
</dbReference>
<dbReference type="SMART" id="SM00327">
    <property type="entry name" value="VWA"/>
    <property type="match status" value="1"/>
</dbReference>
<dbReference type="SUPFAM" id="SSF53300">
    <property type="entry name" value="vWA-like"/>
    <property type="match status" value="1"/>
</dbReference>
<dbReference type="PROSITE" id="PS50234">
    <property type="entry name" value="VWFA"/>
    <property type="match status" value="1"/>
</dbReference>
<feature type="signal peptide" evidence="2">
    <location>
        <begin position="1"/>
        <end position="33"/>
    </location>
</feature>
<feature type="chain" id="PRO_0000304652" description="Voltage-dependent calcium channel subunit alpha-2/delta-3">
    <location>
        <begin position="34"/>
        <end position="1085"/>
    </location>
</feature>
<feature type="chain" id="PRO_0000304653" description="Voltage-dependent calcium channel subunit alpha-2-3" evidence="2">
    <location>
        <begin position="34"/>
        <end status="unknown"/>
    </location>
</feature>
<feature type="chain" id="PRO_0000304654" description="Voltage-dependent calcium channel subunit delta-3" evidence="2">
    <location>
        <begin status="unknown"/>
        <end position="1085"/>
    </location>
</feature>
<feature type="topological domain" description="Extracellular" evidence="2">
    <location>
        <begin position="34"/>
        <end position="1062"/>
    </location>
</feature>
<feature type="transmembrane region" description="Helical" evidence="2">
    <location>
        <begin position="1063"/>
        <end position="1083"/>
    </location>
</feature>
<feature type="topological domain" description="Cytoplasmic" evidence="2">
    <location>
        <begin position="1084"/>
        <end position="1085"/>
    </location>
</feature>
<feature type="domain" description="VWFA" evidence="3">
    <location>
        <begin position="256"/>
        <end position="438"/>
    </location>
</feature>
<feature type="domain" description="Cache">
    <location>
        <begin position="452"/>
        <end position="543"/>
    </location>
</feature>
<feature type="short sequence motif" description="MIDAS-like motif">
    <location>
        <begin position="262"/>
        <end position="266"/>
    </location>
</feature>
<feature type="binding site" evidence="1">
    <location>
        <position position="262"/>
    </location>
    <ligand>
        <name>a divalent metal cation</name>
        <dbReference type="ChEBI" id="CHEBI:60240"/>
    </ligand>
</feature>
<feature type="binding site" evidence="1">
    <location>
        <position position="264"/>
    </location>
    <ligand>
        <name>a divalent metal cation</name>
        <dbReference type="ChEBI" id="CHEBI:60240"/>
    </ligand>
</feature>
<feature type="binding site" evidence="1">
    <location>
        <position position="266"/>
    </location>
    <ligand>
        <name>a divalent metal cation</name>
        <dbReference type="ChEBI" id="CHEBI:60240"/>
    </ligand>
</feature>
<feature type="modified residue" description="Phosphotyrosine" evidence="6">
    <location>
        <position position="918"/>
    </location>
</feature>
<feature type="glycosylation site" description="N-linked (GlcNAc...) asparagine" evidence="2">
    <location>
        <position position="166"/>
    </location>
</feature>
<feature type="glycosylation site" description="N-linked (GlcNAc...) asparagine" evidence="2">
    <location>
        <position position="309"/>
    </location>
</feature>
<feature type="glycosylation site" description="N-linked (GlcNAc...) asparagine" evidence="2">
    <location>
        <position position="547"/>
    </location>
</feature>
<feature type="glycosylation site" description="N-linked (GlcNAc...) asparagine" evidence="2">
    <location>
        <position position="626"/>
    </location>
</feature>
<feature type="disulfide bond" description="Interchain (between alpha-2-3 and delta-3 chains)" evidence="1">
    <location>
        <begin position="412"/>
        <end position="1049"/>
    </location>
</feature>
<comment type="function">
    <text evidence="1">The alpha-2/delta subunit of voltage-dependent calcium channels regulates calcium current density and activation/inactivation kinetics of the calcium channel. Acts as a regulatory subunit for P/Q-type calcium channel (CACNA1A), N-type (CACNA1B), L-type (CACNA1C OR CACNA1D) but not T-type (CACNA1G) (By similarity).</text>
</comment>
<comment type="subunit">
    <text evidence="1">Dimer formed of alpha-2-2 and delta-2 chains; disulfide-linked. Voltage-dependent calcium channels are multisubunit complexes, consisting of alpha-1 (CACNA1), alpha-2 (CACNA2D), beta (CACNB) and delta (CACNA2D) subunits in a 1:1:1:1 ratio (By similarity).</text>
</comment>
<comment type="subcellular location">
    <subcellularLocation>
        <location evidence="5">Membrane</location>
        <topology evidence="5">Single-pass type I membrane protein</topology>
    </subcellularLocation>
</comment>
<comment type="tissue specificity">
    <text evidence="4">In heart, it is expressed in atrium but not in ventricle.</text>
</comment>
<comment type="induction">
    <text evidence="4">By IGF1.</text>
</comment>
<comment type="domain">
    <text evidence="1">The MIDAS-like motif in the VWFA domain binds divalent metal cations and is required to promote trafficking of the alpha-1 (CACNA1) subunit to the plasma membrane by an integrin-like switch.</text>
</comment>
<comment type="PTM">
    <text evidence="1">N-glycosylated.</text>
</comment>
<comment type="PTM">
    <text evidence="1">May be proteolytically processed into subunits alpha-2-3 and delta-3 that are disulfide-linked. It is however unclear whether such cleavage really takes place in vivo and has a functional role (By similarity).</text>
</comment>
<comment type="miscellaneous">
    <text evidence="1">In contrast to CACNA2D1 and CACNA2D2, it does not bind gabapentin, an antiepileptic drug.</text>
</comment>
<comment type="similarity">
    <text evidence="5">Belongs to the calcium channel subunit alpha-2/delta family.</text>
</comment>
<organism>
    <name type="scientific">Rattus norvegicus</name>
    <name type="common">Rat</name>
    <dbReference type="NCBI Taxonomy" id="10116"/>
    <lineage>
        <taxon>Eukaryota</taxon>
        <taxon>Metazoa</taxon>
        <taxon>Chordata</taxon>
        <taxon>Craniata</taxon>
        <taxon>Vertebrata</taxon>
        <taxon>Euteleostomi</taxon>
        <taxon>Mammalia</taxon>
        <taxon>Eutheria</taxon>
        <taxon>Euarchontoglires</taxon>
        <taxon>Glires</taxon>
        <taxon>Rodentia</taxon>
        <taxon>Myomorpha</taxon>
        <taxon>Muroidea</taxon>
        <taxon>Muridae</taxon>
        <taxon>Murinae</taxon>
        <taxon>Rattus</taxon>
    </lineage>
</organism>
<gene>
    <name type="primary">Cacna2d3</name>
</gene>
<evidence type="ECO:0000250" key="1"/>
<evidence type="ECO:0000255" key="2"/>
<evidence type="ECO:0000255" key="3">
    <source>
        <dbReference type="PROSITE-ProRule" id="PRU00219"/>
    </source>
</evidence>
<evidence type="ECO:0000269" key="4">
    <source>
    </source>
</evidence>
<evidence type="ECO:0000305" key="5"/>
<evidence type="ECO:0007744" key="6">
    <source>
    </source>
</evidence>
<sequence length="1085" mass="122204">MAGPGSLCCASRGASALLATALLYAALGDVVRSEQQIPLSVVKLWASAFGGEIKSIAAKYSGSQLLQKKYKEYEKDVAIEEIDGLQLVKKLAKNMEEMFHKKSEAVRRLVEAAEEAHLKHEFDADLQYEYFNAVLINERDKDGNFLELGKEFILAPNDHFNNLPVNISLSDVQVPTNMYNKDPAIVNGVYWSESLNKVFVDNFDRDPSLIWQYFGSAKGFFRQYPGIKWEPDENGVIAFDCRNRKWYIQAATSPKDVVILVDVSGSMKGLRLTIAKQTVSSILDTLGDDDFFNIITYNEELHYVEPCLNGTLVQADRTNKEHFREHLDKLFAKGIGMLDIALNEAFNVLSDFNHTGQGSICSQAIMLITDGAVDTYDTIFAKYNWPERKVRIFTYLIGREAAFADNLKWMACANKGFFTQISTLADVQENVMEYLHVLSRPKVIDQEHDVVWTEAYIDSTLADDQGLVLMTTVAMPVFSKQNETRSKGILLGVVGTDVPVKELLKTIPKYKLGIHGYAFAITNNGYILTHPELRPLYEEGKKRRKPNYSSVDLSEVEWEDRDDVLRNAMVNRKTGKFSMEVKKTVDKGKRVLVMTNDYYYTDIKGAPFSLGVALSRGHGKYFFRGNVTIEEGLHDLEHPDVSLADEWSYCNTDLHPEHRHLSQLEAIKLYLKGKEPLLQCDKELIQEVLFDAVVSAPIEAYWTSLALNKSENSDKGVEVAFLGTRTGLSRINLFVGAEQLTNQDFLKARDKENIFNADHFPLWYRRAAEQIPGSFVYSIPFSTGTVNKSNVVTASTSIQLLDERKSPVVAAVGIQMKLEFFQRKFWTASRQCASLDGKCSISCDDETVNCYLIDNNGFILVSEDYTQTGDFFGEVEGAVMNKLLTMGSFKRITLYDYQAMCRANKESSDSAHGLLDPYKAFLSAAKWIVTELVLFLVEFNLCSWWHSDMTAKAQKLKQTLEPCDTEYPAFVSERTIKETTGNIACEDCSKSFVIQQIPSSNLFMVVVDSSCLCESVAPITMAPIEIRYNESLKCERLKAQKIRRRPESCHGFHPEENARECGGASSLQAQVALLLLPLVSSLFSR</sequence>
<keyword id="KW-0106">Calcium</keyword>
<keyword id="KW-0107">Calcium channel</keyword>
<keyword id="KW-0109">Calcium transport</keyword>
<keyword id="KW-1015">Disulfide bond</keyword>
<keyword id="KW-0325">Glycoprotein</keyword>
<keyword id="KW-0407">Ion channel</keyword>
<keyword id="KW-0406">Ion transport</keyword>
<keyword id="KW-0472">Membrane</keyword>
<keyword id="KW-0479">Metal-binding</keyword>
<keyword id="KW-0597">Phosphoprotein</keyword>
<keyword id="KW-1185">Reference proteome</keyword>
<keyword id="KW-0732">Signal</keyword>
<keyword id="KW-0812">Transmembrane</keyword>
<keyword id="KW-1133">Transmembrane helix</keyword>
<keyword id="KW-0813">Transport</keyword>
<keyword id="KW-0851">Voltage-gated channel</keyword>
<reference key="1">
    <citation type="journal article" date="2003" name="J. Mol. Cell. Cardiol.">
        <title>Molecular cloning of calcium channel alpha(2)delta-subunits from rat atria and the differential regulation of their expression by IGF-1.</title>
        <authorList>
            <person name="Chu P.-J."/>
            <person name="Best P.M."/>
        </authorList>
    </citation>
    <scope>NUCLEOTIDE SEQUENCE [MRNA]</scope>
    <scope>TISSUE SPECIFICITY</scope>
    <scope>INDUCTION</scope>
    <source>
        <strain>Sprague-Dawley</strain>
        <tissue>Heart atrium</tissue>
    </source>
</reference>
<reference key="2">
    <citation type="journal article" date="2006" name="Proc. Natl. Acad. Sci. U.S.A.">
        <title>Quantitative phosphoproteomics of vasopressin-sensitive renal cells: regulation of aquaporin-2 phosphorylation at two sites.</title>
        <authorList>
            <person name="Hoffert J.D."/>
            <person name="Pisitkun T."/>
            <person name="Wang G."/>
            <person name="Shen R.-F."/>
            <person name="Knepper M.A."/>
        </authorList>
    </citation>
    <scope>PHOSPHORYLATION [LARGE SCALE ANALYSIS] AT TYR-918</scope>
    <scope>IDENTIFICATION BY MASS SPECTROMETRY [LARGE SCALE ANALYSIS]</scope>
</reference>
<name>CA2D3_RAT</name>